<sequence length="257" mass="27895">MEFPDLGAHCSEPSCQRLDFLPLKCDACSGIFCADHVAYAQHHCGSAYQKDIQVPVCPLCNVPVPVARGEPPDRAVGEHIDRDCRSDPAQQKRKIFTNKCERSGCRQREMMKLTCDRCGRNFCIKHRHPLDHECSGEGHQTSRAGLAAISRAQGLASTSTAPSPSRTLPSSSSPSRATPQLPTRTASPVIALQNGLSEDEALQRALELSLAEAKPQVLSSQEEDDLALAQALSASEAEYQQQQAQSRSLKPSNCSLC</sequence>
<name>ZFN2B_MOUSE</name>
<protein>
    <recommendedName>
        <fullName evidence="10">AN1-type zinc finger protein 2B</fullName>
    </recommendedName>
    <alternativeName>
        <fullName evidence="9">Arsenite-inducible RNA-associated protein-like protein</fullName>
        <shortName evidence="9">AIRAP-like protein</shortName>
    </alternativeName>
</protein>
<dbReference type="EMBL" id="AK004332">
    <property type="protein sequence ID" value="BAB23266.1"/>
    <property type="molecule type" value="mRNA"/>
</dbReference>
<dbReference type="EMBL" id="AK151430">
    <property type="protein sequence ID" value="BAE30394.1"/>
    <property type="molecule type" value="mRNA"/>
</dbReference>
<dbReference type="EMBL" id="BC011495">
    <property type="protein sequence ID" value="AAH11495.1"/>
    <property type="molecule type" value="mRNA"/>
</dbReference>
<dbReference type="CCDS" id="CCDS15064.1"/>
<dbReference type="RefSeq" id="NP_001153377.1">
    <property type="nucleotide sequence ID" value="NM_001159905.1"/>
</dbReference>
<dbReference type="RefSeq" id="NP_001153378.1">
    <property type="nucleotide sequence ID" value="NM_001159906.1"/>
</dbReference>
<dbReference type="RefSeq" id="NP_081122.2">
    <property type="nucleotide sequence ID" value="NM_026846.3"/>
</dbReference>
<dbReference type="PDB" id="4XKH">
    <property type="method" value="X-ray"/>
    <property type="resolution" value="3.00 A"/>
    <property type="chains" value="C/E/H=187-240"/>
</dbReference>
<dbReference type="PDBsum" id="4XKH"/>
<dbReference type="SMR" id="Q91X58"/>
<dbReference type="BioGRID" id="213068">
    <property type="interactions" value="26"/>
</dbReference>
<dbReference type="DIP" id="DIP-46091N"/>
<dbReference type="FunCoup" id="Q91X58">
    <property type="interactions" value="1393"/>
</dbReference>
<dbReference type="IntAct" id="Q91X58">
    <property type="interactions" value="2"/>
</dbReference>
<dbReference type="STRING" id="10090.ENSMUSP00000027394"/>
<dbReference type="GlyGen" id="Q91X58">
    <property type="glycosylation" value="3 sites, 1 O-linked glycan (3 sites)"/>
</dbReference>
<dbReference type="iPTMnet" id="Q91X58"/>
<dbReference type="PhosphoSitePlus" id="Q91X58"/>
<dbReference type="SwissPalm" id="Q91X58"/>
<dbReference type="jPOST" id="Q91X58"/>
<dbReference type="PaxDb" id="10090-ENSMUSP00000027394"/>
<dbReference type="ProteomicsDB" id="302127"/>
<dbReference type="Pumba" id="Q91X58"/>
<dbReference type="Antibodypedia" id="51845">
    <property type="antibodies" value="207 antibodies from 15 providers"/>
</dbReference>
<dbReference type="DNASU" id="68818"/>
<dbReference type="Ensembl" id="ENSMUST00000027394.12">
    <property type="protein sequence ID" value="ENSMUSP00000027394.6"/>
    <property type="gene ID" value="ENSMUSG00000026197.13"/>
</dbReference>
<dbReference type="Ensembl" id="ENSMUST00000160439.8">
    <property type="protein sequence ID" value="ENSMUSP00000125086.2"/>
    <property type="gene ID" value="ENSMUSG00000026197.13"/>
</dbReference>
<dbReference type="GeneID" id="68818"/>
<dbReference type="KEGG" id="mmu:68818"/>
<dbReference type="UCSC" id="uc007bnw.2">
    <property type="organism name" value="mouse"/>
</dbReference>
<dbReference type="AGR" id="MGI:1916068"/>
<dbReference type="CTD" id="130617"/>
<dbReference type="MGI" id="MGI:1916068">
    <property type="gene designation" value="Zfand2b"/>
</dbReference>
<dbReference type="VEuPathDB" id="HostDB:ENSMUSG00000026197"/>
<dbReference type="eggNOG" id="KOG3183">
    <property type="taxonomic scope" value="Eukaryota"/>
</dbReference>
<dbReference type="GeneTree" id="ENSGT00940000159648"/>
<dbReference type="InParanoid" id="Q91X58"/>
<dbReference type="OMA" id="YISHECK"/>
<dbReference type="OrthoDB" id="431929at2759"/>
<dbReference type="PhylomeDB" id="Q91X58"/>
<dbReference type="TreeFam" id="TF314219"/>
<dbReference type="BioGRID-ORCS" id="68818">
    <property type="hits" value="1 hit in 76 CRISPR screens"/>
</dbReference>
<dbReference type="EvolutionaryTrace" id="Q91X58"/>
<dbReference type="PRO" id="PR:Q91X58"/>
<dbReference type="Proteomes" id="UP000000589">
    <property type="component" value="Chromosome 1"/>
</dbReference>
<dbReference type="RNAct" id="Q91X58">
    <property type="molecule type" value="protein"/>
</dbReference>
<dbReference type="Bgee" id="ENSMUSG00000026197">
    <property type="expression patterns" value="Expressed in granulocyte and 258 other cell types or tissues"/>
</dbReference>
<dbReference type="ExpressionAtlas" id="Q91X58">
    <property type="expression patterns" value="baseline and differential"/>
</dbReference>
<dbReference type="GO" id="GO:0005783">
    <property type="term" value="C:endoplasmic reticulum"/>
    <property type="evidence" value="ECO:0000314"/>
    <property type="project" value="UniProtKB"/>
</dbReference>
<dbReference type="GO" id="GO:0005789">
    <property type="term" value="C:endoplasmic reticulum membrane"/>
    <property type="evidence" value="ECO:0007669"/>
    <property type="project" value="UniProtKB-SubCell"/>
</dbReference>
<dbReference type="GO" id="GO:0016020">
    <property type="term" value="C:membrane"/>
    <property type="evidence" value="ECO:0000314"/>
    <property type="project" value="UniProtKB"/>
</dbReference>
<dbReference type="GO" id="GO:0000502">
    <property type="term" value="C:proteasome complex"/>
    <property type="evidence" value="ECO:0007669"/>
    <property type="project" value="Ensembl"/>
</dbReference>
<dbReference type="GO" id="GO:0036435">
    <property type="term" value="F:K48-linked polyubiquitin modification-dependent protein binding"/>
    <property type="evidence" value="ECO:0000314"/>
    <property type="project" value="UniProtKB"/>
</dbReference>
<dbReference type="GO" id="GO:0031593">
    <property type="term" value="F:polyubiquitin modification-dependent protein binding"/>
    <property type="evidence" value="ECO:0000314"/>
    <property type="project" value="UniProtKB"/>
</dbReference>
<dbReference type="GO" id="GO:0043130">
    <property type="term" value="F:ubiquitin binding"/>
    <property type="evidence" value="ECO:0000314"/>
    <property type="project" value="UniProtKB"/>
</dbReference>
<dbReference type="GO" id="GO:0008270">
    <property type="term" value="F:zinc ion binding"/>
    <property type="evidence" value="ECO:0007669"/>
    <property type="project" value="UniProtKB-KW"/>
</dbReference>
<dbReference type="GO" id="GO:0043161">
    <property type="term" value="P:proteasome-mediated ubiquitin-dependent protein catabolic process"/>
    <property type="evidence" value="ECO:0000315"/>
    <property type="project" value="UniProtKB"/>
</dbReference>
<dbReference type="GO" id="GO:0045047">
    <property type="term" value="P:protein targeting to ER"/>
    <property type="evidence" value="ECO:0000315"/>
    <property type="project" value="UniProtKB"/>
</dbReference>
<dbReference type="GO" id="GO:0043567">
    <property type="term" value="P:regulation of insulin-like growth factor receptor signaling pathway"/>
    <property type="evidence" value="ECO:0000315"/>
    <property type="project" value="UniProtKB"/>
</dbReference>
<dbReference type="GO" id="GO:0006616">
    <property type="term" value="P:SRP-dependent cotranslational protein targeting to membrane, translocation"/>
    <property type="evidence" value="ECO:0000266"/>
    <property type="project" value="MGI"/>
</dbReference>
<dbReference type="FunFam" id="4.10.1110.10:FF:000003">
    <property type="entry name" value="AN1-type zinc finger protein 2B isoform X1"/>
    <property type="match status" value="1"/>
</dbReference>
<dbReference type="FunFam" id="4.10.1110.10:FF:000004">
    <property type="entry name" value="AN1-type zinc finger protein 2B isoform X1"/>
    <property type="match status" value="1"/>
</dbReference>
<dbReference type="Gene3D" id="4.10.1110.10">
    <property type="entry name" value="AN1-like Zinc finger"/>
    <property type="match status" value="2"/>
</dbReference>
<dbReference type="InterPro" id="IPR035896">
    <property type="entry name" value="AN1-like_Znf"/>
</dbReference>
<dbReference type="InterPro" id="IPR003903">
    <property type="entry name" value="UIM_dom"/>
</dbReference>
<dbReference type="InterPro" id="IPR000058">
    <property type="entry name" value="Znf_AN1"/>
</dbReference>
<dbReference type="PANTHER" id="PTHR14677:SF13">
    <property type="entry name" value="AN1-TYPE ZINC FINGER PROTEIN 2B"/>
    <property type="match status" value="1"/>
</dbReference>
<dbReference type="PANTHER" id="PTHR14677">
    <property type="entry name" value="ARSENITE INDUCUBLE RNA ASSOCIATED PROTEIN AIP-1-RELATED"/>
    <property type="match status" value="1"/>
</dbReference>
<dbReference type="Pfam" id="PF01428">
    <property type="entry name" value="zf-AN1"/>
    <property type="match status" value="2"/>
</dbReference>
<dbReference type="Pfam" id="PF25403">
    <property type="entry name" value="zf-C2H2_ZFAND2"/>
    <property type="match status" value="1"/>
</dbReference>
<dbReference type="SMART" id="SM00726">
    <property type="entry name" value="UIM"/>
    <property type="match status" value="2"/>
</dbReference>
<dbReference type="SMART" id="SM00154">
    <property type="entry name" value="ZnF_AN1"/>
    <property type="match status" value="2"/>
</dbReference>
<dbReference type="SUPFAM" id="SSF118310">
    <property type="entry name" value="AN1-like Zinc finger"/>
    <property type="match status" value="2"/>
</dbReference>
<dbReference type="PROSITE" id="PS50330">
    <property type="entry name" value="UIM"/>
    <property type="match status" value="1"/>
</dbReference>
<dbReference type="PROSITE" id="PS51039">
    <property type="entry name" value="ZF_AN1"/>
    <property type="match status" value="2"/>
</dbReference>
<keyword id="KW-0002">3D-structure</keyword>
<keyword id="KW-0256">Endoplasmic reticulum</keyword>
<keyword id="KW-0449">Lipoprotein</keyword>
<keyword id="KW-0472">Membrane</keyword>
<keyword id="KW-0479">Metal-binding</keyword>
<keyword id="KW-0488">Methylation</keyword>
<keyword id="KW-0597">Phosphoprotein</keyword>
<keyword id="KW-0636">Prenylation</keyword>
<keyword id="KW-1185">Reference proteome</keyword>
<keyword id="KW-0677">Repeat</keyword>
<keyword id="KW-0862">Zinc</keyword>
<keyword id="KW-0863">Zinc-finger</keyword>
<proteinExistence type="evidence at protein level"/>
<organism>
    <name type="scientific">Mus musculus</name>
    <name type="common">Mouse</name>
    <dbReference type="NCBI Taxonomy" id="10090"/>
    <lineage>
        <taxon>Eukaryota</taxon>
        <taxon>Metazoa</taxon>
        <taxon>Chordata</taxon>
        <taxon>Craniata</taxon>
        <taxon>Vertebrata</taxon>
        <taxon>Euteleostomi</taxon>
        <taxon>Mammalia</taxon>
        <taxon>Eutheria</taxon>
        <taxon>Euarchontoglires</taxon>
        <taxon>Glires</taxon>
        <taxon>Rodentia</taxon>
        <taxon>Myomorpha</taxon>
        <taxon>Muroidea</taxon>
        <taxon>Muridae</taxon>
        <taxon>Murinae</taxon>
        <taxon>Mus</taxon>
        <taxon>Mus</taxon>
    </lineage>
</organism>
<comment type="function">
    <text evidence="4 5 6 7">Plays a role in protein homeostasis by regulating both the translocation and the ubiquitin-mediated proteasomal degradation of nascent proteins at the endoplasmic reticulum (PubMed:24160817, PubMed:26337389, PubMed:26692333). It is involved in the regulation of signal-mediated translocation of proteins into the endoplasmic reticulum (PubMed:24160817). It also plays a role in the ubiquitin-mediated proteasomal degradation of proteins for which signal-mediated translocation to the endoplasmic reticulum has failed (PubMed:18467495, PubMed:26337389). May therefore function in the endoplasmic reticulum stress-induced pre-emptive quality control, a mechanism that selectively attenuates the translocation of newly synthesized proteins into the endoplasmic reticulum and reroutes them to the cytosol for proteasomal degradation (PubMed:24160817, PubMed:26337389). By controlling the steady-state expression of the IGF1R receptor, indirectly regulates the insulin-like growth factor receptor signaling pathway (PubMed:26692333).</text>
</comment>
<comment type="subunit">
    <text evidence="4 5 6 7 8">Binds 'Lys-48'-linked polyubiquitin chains of ubiquitinated proteins (PubMed:18467495, PubMed:24160817, PubMed:26876100). Associates with the proteasome complex; upon exposure to arsenite (PubMed:18467495, PubMed:26876100). Interacts (via VIM motif) with VCP; the interaction is direct (PubMed:24160817, PubMed:26337389). Interacts with BAG6 (PubMed:24160817, PubMed:26337389, PubMed:26876100). Interacts with IGF1R (nascent precursor form) (PubMed:26692333). Interacts with DERL1, FAF2, NPLOC4 and UFD1; probably through VCP (PubMed:24160817).</text>
</comment>
<comment type="interaction">
    <interactant intactId="EBI-15701753">
        <id>Q91X58</id>
    </interactant>
    <interactant intactId="EBI-991653">
        <id>Q9R1P4</id>
        <label>Psma1</label>
    </interactant>
    <organismsDiffer>false</organismsDiffer>
    <experiments>2</experiments>
</comment>
<comment type="subcellular location">
    <subcellularLocation>
        <location evidence="4">Endoplasmic reticulum membrane</location>
        <topology evidence="11">Lipid-anchor</topology>
    </subcellularLocation>
</comment>
<comment type="domain">
    <text evidence="4 6 8">The UIM domains specifically bind 'Lys-48'-linked ubiquitin polymers (PubMed:18467495, PubMed:26876100). The UIM domains mediate interaction with polyubiquitinated proteins (PubMed:18467495, PubMed:26337389).</text>
</comment>
<comment type="PTM">
    <text evidence="11">Phosphorylated by MAPK14 (Probable). Phosphorylation has no effect on association with the proteasome complex (Probable).</text>
</comment>
<comment type="disruption phenotype">
    <text evidence="7">Knockout mice undergo premature death due to the occurrence of myelo-proliferative neoplasms. The absence of Zfand2b plays a driver role in the development of these neoplasms by hyperactivating the insulin-like growth factor receptor signaling pathway. This is due to increased expression, in particular at the cell surface, of the IGF1R receptor.</text>
</comment>
<evidence type="ECO:0000255" key="1">
    <source>
        <dbReference type="PROSITE-ProRule" id="PRU00213"/>
    </source>
</evidence>
<evidence type="ECO:0000255" key="2">
    <source>
        <dbReference type="PROSITE-ProRule" id="PRU00449"/>
    </source>
</evidence>
<evidence type="ECO:0000256" key="3">
    <source>
        <dbReference type="SAM" id="MobiDB-lite"/>
    </source>
</evidence>
<evidence type="ECO:0000269" key="4">
    <source>
    </source>
</evidence>
<evidence type="ECO:0000269" key="5">
    <source>
    </source>
</evidence>
<evidence type="ECO:0000269" key="6">
    <source>
    </source>
</evidence>
<evidence type="ECO:0000269" key="7">
    <source>
    </source>
</evidence>
<evidence type="ECO:0000269" key="8">
    <source>
    </source>
</evidence>
<evidence type="ECO:0000303" key="9">
    <source>
    </source>
</evidence>
<evidence type="ECO:0000305" key="10"/>
<evidence type="ECO:0000305" key="11">
    <source>
    </source>
</evidence>
<evidence type="ECO:0000305" key="12">
    <source>
    </source>
</evidence>
<evidence type="ECO:0000312" key="13">
    <source>
        <dbReference type="MGI" id="MGI:1916068"/>
    </source>
</evidence>
<evidence type="ECO:0007744" key="14">
    <source>
        <dbReference type="PDB" id="4XKH"/>
    </source>
</evidence>
<evidence type="ECO:0007829" key="15">
    <source>
        <dbReference type="PDB" id="4XKH"/>
    </source>
</evidence>
<reference key="1">
    <citation type="journal article" date="2005" name="Science">
        <title>The transcriptional landscape of the mammalian genome.</title>
        <authorList>
            <person name="Carninci P."/>
            <person name="Kasukawa T."/>
            <person name="Katayama S."/>
            <person name="Gough J."/>
            <person name="Frith M.C."/>
            <person name="Maeda N."/>
            <person name="Oyama R."/>
            <person name="Ravasi T."/>
            <person name="Lenhard B."/>
            <person name="Wells C."/>
            <person name="Kodzius R."/>
            <person name="Shimokawa K."/>
            <person name="Bajic V.B."/>
            <person name="Brenner S.E."/>
            <person name="Batalov S."/>
            <person name="Forrest A.R."/>
            <person name="Zavolan M."/>
            <person name="Davis M.J."/>
            <person name="Wilming L.G."/>
            <person name="Aidinis V."/>
            <person name="Allen J.E."/>
            <person name="Ambesi-Impiombato A."/>
            <person name="Apweiler R."/>
            <person name="Aturaliya R.N."/>
            <person name="Bailey T.L."/>
            <person name="Bansal M."/>
            <person name="Baxter L."/>
            <person name="Beisel K.W."/>
            <person name="Bersano T."/>
            <person name="Bono H."/>
            <person name="Chalk A.M."/>
            <person name="Chiu K.P."/>
            <person name="Choudhary V."/>
            <person name="Christoffels A."/>
            <person name="Clutterbuck D.R."/>
            <person name="Crowe M.L."/>
            <person name="Dalla E."/>
            <person name="Dalrymple B.P."/>
            <person name="de Bono B."/>
            <person name="Della Gatta G."/>
            <person name="di Bernardo D."/>
            <person name="Down T."/>
            <person name="Engstrom P."/>
            <person name="Fagiolini M."/>
            <person name="Faulkner G."/>
            <person name="Fletcher C.F."/>
            <person name="Fukushima T."/>
            <person name="Furuno M."/>
            <person name="Futaki S."/>
            <person name="Gariboldi M."/>
            <person name="Georgii-Hemming P."/>
            <person name="Gingeras T.R."/>
            <person name="Gojobori T."/>
            <person name="Green R.E."/>
            <person name="Gustincich S."/>
            <person name="Harbers M."/>
            <person name="Hayashi Y."/>
            <person name="Hensch T.K."/>
            <person name="Hirokawa N."/>
            <person name="Hill D."/>
            <person name="Huminiecki L."/>
            <person name="Iacono M."/>
            <person name="Ikeo K."/>
            <person name="Iwama A."/>
            <person name="Ishikawa T."/>
            <person name="Jakt M."/>
            <person name="Kanapin A."/>
            <person name="Katoh M."/>
            <person name="Kawasawa Y."/>
            <person name="Kelso J."/>
            <person name="Kitamura H."/>
            <person name="Kitano H."/>
            <person name="Kollias G."/>
            <person name="Krishnan S.P."/>
            <person name="Kruger A."/>
            <person name="Kummerfeld S.K."/>
            <person name="Kurochkin I.V."/>
            <person name="Lareau L.F."/>
            <person name="Lazarevic D."/>
            <person name="Lipovich L."/>
            <person name="Liu J."/>
            <person name="Liuni S."/>
            <person name="McWilliam S."/>
            <person name="Madan Babu M."/>
            <person name="Madera M."/>
            <person name="Marchionni L."/>
            <person name="Matsuda H."/>
            <person name="Matsuzawa S."/>
            <person name="Miki H."/>
            <person name="Mignone F."/>
            <person name="Miyake S."/>
            <person name="Morris K."/>
            <person name="Mottagui-Tabar S."/>
            <person name="Mulder N."/>
            <person name="Nakano N."/>
            <person name="Nakauchi H."/>
            <person name="Ng P."/>
            <person name="Nilsson R."/>
            <person name="Nishiguchi S."/>
            <person name="Nishikawa S."/>
            <person name="Nori F."/>
            <person name="Ohara O."/>
            <person name="Okazaki Y."/>
            <person name="Orlando V."/>
            <person name="Pang K.C."/>
            <person name="Pavan W.J."/>
            <person name="Pavesi G."/>
            <person name="Pesole G."/>
            <person name="Petrovsky N."/>
            <person name="Piazza S."/>
            <person name="Reed J."/>
            <person name="Reid J.F."/>
            <person name="Ring B.Z."/>
            <person name="Ringwald M."/>
            <person name="Rost B."/>
            <person name="Ruan Y."/>
            <person name="Salzberg S.L."/>
            <person name="Sandelin A."/>
            <person name="Schneider C."/>
            <person name="Schoenbach C."/>
            <person name="Sekiguchi K."/>
            <person name="Semple C.A."/>
            <person name="Seno S."/>
            <person name="Sessa L."/>
            <person name="Sheng Y."/>
            <person name="Shibata Y."/>
            <person name="Shimada H."/>
            <person name="Shimada K."/>
            <person name="Silva D."/>
            <person name="Sinclair B."/>
            <person name="Sperling S."/>
            <person name="Stupka E."/>
            <person name="Sugiura K."/>
            <person name="Sultana R."/>
            <person name="Takenaka Y."/>
            <person name="Taki K."/>
            <person name="Tammoja K."/>
            <person name="Tan S.L."/>
            <person name="Tang S."/>
            <person name="Taylor M.S."/>
            <person name="Tegner J."/>
            <person name="Teichmann S.A."/>
            <person name="Ueda H.R."/>
            <person name="van Nimwegen E."/>
            <person name="Verardo R."/>
            <person name="Wei C.L."/>
            <person name="Yagi K."/>
            <person name="Yamanishi H."/>
            <person name="Zabarovsky E."/>
            <person name="Zhu S."/>
            <person name="Zimmer A."/>
            <person name="Hide W."/>
            <person name="Bult C."/>
            <person name="Grimmond S.M."/>
            <person name="Teasdale R.D."/>
            <person name="Liu E.T."/>
            <person name="Brusic V."/>
            <person name="Quackenbush J."/>
            <person name="Wahlestedt C."/>
            <person name="Mattick J.S."/>
            <person name="Hume D.A."/>
            <person name="Kai C."/>
            <person name="Sasaki D."/>
            <person name="Tomaru Y."/>
            <person name="Fukuda S."/>
            <person name="Kanamori-Katayama M."/>
            <person name="Suzuki M."/>
            <person name="Aoki J."/>
            <person name="Arakawa T."/>
            <person name="Iida J."/>
            <person name="Imamura K."/>
            <person name="Itoh M."/>
            <person name="Kato T."/>
            <person name="Kawaji H."/>
            <person name="Kawagashira N."/>
            <person name="Kawashima T."/>
            <person name="Kojima M."/>
            <person name="Kondo S."/>
            <person name="Konno H."/>
            <person name="Nakano K."/>
            <person name="Ninomiya N."/>
            <person name="Nishio T."/>
            <person name="Okada M."/>
            <person name="Plessy C."/>
            <person name="Shibata K."/>
            <person name="Shiraki T."/>
            <person name="Suzuki S."/>
            <person name="Tagami M."/>
            <person name="Waki K."/>
            <person name="Watahiki A."/>
            <person name="Okamura-Oho Y."/>
            <person name="Suzuki H."/>
            <person name="Kawai J."/>
            <person name="Hayashizaki Y."/>
        </authorList>
    </citation>
    <scope>NUCLEOTIDE SEQUENCE [LARGE SCALE MRNA]</scope>
    <source>
        <strain>C57BL/6J</strain>
        <tissue>Bone marrow</tissue>
        <tissue>Embryo</tissue>
    </source>
</reference>
<reference key="2">
    <citation type="journal article" date="2004" name="Genome Res.">
        <title>The status, quality, and expansion of the NIH full-length cDNA project: the Mammalian Gene Collection (MGC).</title>
        <authorList>
            <consortium name="The MGC Project Team"/>
        </authorList>
    </citation>
    <scope>NUCLEOTIDE SEQUENCE [LARGE SCALE MRNA]</scope>
    <source>
        <strain>FVB/N</strain>
        <tissue>Liver</tissue>
    </source>
</reference>
<reference key="3">
    <citation type="journal article" date="2004" name="Mol. Cell. Proteomics">
        <title>Phosphoproteomic analysis of the developing mouse brain.</title>
        <authorList>
            <person name="Ballif B.A."/>
            <person name="Villen J."/>
            <person name="Beausoleil S.A."/>
            <person name="Schwartz D."/>
            <person name="Gygi S.P."/>
        </authorList>
    </citation>
    <scope>IDENTIFICATION BY MASS SPECTROMETRY [LARGE SCALE ANALYSIS]</scope>
    <source>
        <tissue>Embryonic brain</tissue>
    </source>
</reference>
<reference key="4">
    <citation type="journal article" date="2008" name="Proc. Natl. Acad. Sci. U.S.A.">
        <title>Proteasomal adaptation to environmental stress links resistance to proteotoxicity with longevity in Caenorhabditis elegans.</title>
        <authorList>
            <person name="Yun C."/>
            <person name="Stanhill A."/>
            <person name="Yang Y."/>
            <person name="Zhang Y."/>
            <person name="Haynes C.M."/>
            <person name="Xu C.F."/>
            <person name="Neubert T.A."/>
            <person name="Mor A."/>
            <person name="Philips M.R."/>
            <person name="Ron D."/>
        </authorList>
    </citation>
    <scope>FUNCTION</scope>
    <scope>UBIQUITIN-BINDING</scope>
    <scope>INTERACTION WITH PROTEASOME</scope>
    <scope>SUBCELLULAR LOCATION</scope>
    <scope>TOPOLOGY</scope>
    <scope>MUTAGENESIS OF SER-163; SER-173; SER-187; ALA-201; ALA-229; ALA-231 AND CYS-254</scope>
    <scope>PHOSPHORYLATION AT SER-163; SER-173 AND SER-187 BY MAPK14</scope>
    <scope>ISOPRENYLATION AT CYS-254</scope>
    <scope>METHYLATION AT CYS-254</scope>
    <scope>DOMAIN</scope>
</reference>
<reference key="5">
    <citation type="journal article" date="2010" name="Cell">
        <title>A tissue-specific atlas of mouse protein phosphorylation and expression.</title>
        <authorList>
            <person name="Huttlin E.L."/>
            <person name="Jedrychowski M.P."/>
            <person name="Elias J.E."/>
            <person name="Goswami T."/>
            <person name="Rad R."/>
            <person name="Beausoleil S.A."/>
            <person name="Villen J."/>
            <person name="Haas W."/>
            <person name="Sowa M.E."/>
            <person name="Gygi S.P."/>
        </authorList>
    </citation>
    <scope>IDENTIFICATION BY MASS SPECTROMETRY [LARGE SCALE ANALYSIS]</scope>
    <source>
        <tissue>Brain</tissue>
        <tissue>Liver</tissue>
        <tissue>Lung</tissue>
        <tissue>Pancreas</tissue>
        <tissue>Spleen</tissue>
    </source>
</reference>
<reference key="6">
    <citation type="journal article" date="2014" name="Biochem. J.">
        <title>Signal-peptide-mediated translocation is regulated by a p97-AIRAPL complex.</title>
        <authorList>
            <person name="Glinka T."/>
            <person name="Alter J."/>
            <person name="Braunstein I."/>
            <person name="Tzach L."/>
            <person name="Wei Sheng C."/>
            <person name="Geifman S."/>
            <person name="Edelmann M.J."/>
            <person name="Kessler B.M."/>
            <person name="Stanhill A."/>
        </authorList>
    </citation>
    <scope>FUNCTION</scope>
    <scope>UBIQUITIN-BINDING</scope>
    <scope>INTERACTION WITH BAG6</scope>
    <scope>DERL1</scope>
    <scope>FAF2</scope>
    <scope>NPLOC4; UFD1 AND VCP</scope>
    <scope>REGION</scope>
</reference>
<reference key="7">
    <citation type="journal article" date="2015" name="Mol. Biol. Cell">
        <title>Proteasomal degradation of preemptive quality control (pQC) substrates is mediated by an AIRAPL-p97 complex.</title>
        <authorList>
            <person name="Braunstein I."/>
            <person name="Zach L."/>
            <person name="Allan S."/>
            <person name="Kalies K.U."/>
            <person name="Stanhill A."/>
        </authorList>
    </citation>
    <scope>FUNCTION</scope>
    <scope>INTERACTION WITH BAG6 AND VCP</scope>
    <scope>DOMAIN</scope>
    <scope>MUTAGENESIS OF ALA-201; ALA-229 AND ALA-231</scope>
</reference>
<reference key="8">
    <citation type="journal article" date="2016" name="Nat. Med.">
        <title>Loss of the proteostasis factor AIRAPL causes myeloid transformation by deregulating IGF-1 signaling.</title>
        <authorList>
            <person name="Osorio F.G."/>
            <person name="Soria-Valles C."/>
            <person name="Santiago-Fernandez O."/>
            <person name="Bernal T."/>
            <person name="Mittelbrunn M."/>
            <person name="Colado E."/>
            <person name="Rodriguez F."/>
            <person name="Bonzon-Kulichenko E."/>
            <person name="Vazquez J."/>
            <person name="Porta-de-la-Riva M."/>
            <person name="Ceron J."/>
            <person name="Fueyo A."/>
            <person name="Li J."/>
            <person name="Green A.R."/>
            <person name="Freije J.M."/>
            <person name="Lopez-Otin C."/>
        </authorList>
    </citation>
    <scope>FUNCTION</scope>
    <scope>INTERACTION WITH IGF1R</scope>
    <scope>DISRUPTION PHENOTYPE</scope>
</reference>
<reference evidence="14" key="9">
    <citation type="journal article" date="2016" name="Structure">
        <title>Selective Binding of AIRAPL Tandem UIMs to Lys48-Linked Tri-Ubiquitin Chains.</title>
        <authorList>
            <person name="Rahighi S."/>
            <person name="Braunstein I."/>
            <person name="Ternette N."/>
            <person name="Kessler B."/>
            <person name="Kawasaki M."/>
            <person name="Kato R."/>
            <person name="Matsui T."/>
            <person name="Weiss T.M."/>
            <person name="Stanhill A."/>
            <person name="Wakatsuki S."/>
        </authorList>
    </citation>
    <scope>X-RAY CRYSTALLOGRAPHY (3.00 ANGSTROMS) OF 187-240 IN COMPLEX WITH LYS-48-LINKED TRI-UBIQUITIN CHAIN</scope>
    <scope>INTERACTION WITH BAG6 AND PROTEASOME</scope>
    <scope>DOMAIN</scope>
    <scope>MUTAGENESIS OF LEU-202; ALA-205; LEU-206; 213-ALA--SER-220; LYS-214; PRO-215; LEU-218; LEU-226; ALA-227; LEU-228; ALA-229; GLN-230; ALA-231 AND SER-233</scope>
</reference>
<gene>
    <name evidence="13" type="primary">Zfand2b</name>
    <name evidence="9" type="synonym">Airapl</name>
</gene>
<feature type="chain" id="PRO_0000232877" description="AN1-type zinc finger protein 2B">
    <location>
        <begin position="1"/>
        <end position="254"/>
    </location>
</feature>
<feature type="propeptide" id="PRO_0000444336" description="Removed in mature form" evidence="11">
    <location>
        <begin position="255"/>
        <end position="257"/>
    </location>
</feature>
<feature type="domain" description="UIM 1" evidence="1">
    <location>
        <begin position="197"/>
        <end position="216"/>
    </location>
</feature>
<feature type="domain" description="UIM 2" evidence="1">
    <location>
        <begin position="221"/>
        <end position="240"/>
    </location>
</feature>
<feature type="zinc finger region" description="AN1-type 1" evidence="2">
    <location>
        <begin position="4"/>
        <end position="52"/>
    </location>
</feature>
<feature type="zinc finger region" description="AN1-type 2" evidence="2">
    <location>
        <begin position="94"/>
        <end position="142"/>
    </location>
</feature>
<feature type="region of interest" description="VCP/p97-interacting motif (VIM)" evidence="12">
    <location>
        <begin position="141"/>
        <end position="151"/>
    </location>
</feature>
<feature type="region of interest" description="Disordered" evidence="3">
    <location>
        <begin position="152"/>
        <end position="184"/>
    </location>
</feature>
<feature type="short sequence motif" description="CAAX motif" evidence="11">
    <location>
        <begin position="254"/>
        <end position="257"/>
    </location>
</feature>
<feature type="compositionally biased region" description="Low complexity" evidence="3">
    <location>
        <begin position="155"/>
        <end position="179"/>
    </location>
</feature>
<feature type="binding site" evidence="2">
    <location>
        <position position="10"/>
    </location>
    <ligand>
        <name>Zn(2+)</name>
        <dbReference type="ChEBI" id="CHEBI:29105"/>
        <label>1</label>
    </ligand>
</feature>
<feature type="binding site" evidence="2">
    <location>
        <position position="15"/>
    </location>
    <ligand>
        <name>Zn(2+)</name>
        <dbReference type="ChEBI" id="CHEBI:29105"/>
        <label>1</label>
    </ligand>
</feature>
<feature type="binding site" evidence="2">
    <location>
        <position position="25"/>
    </location>
    <ligand>
        <name>Zn(2+)</name>
        <dbReference type="ChEBI" id="CHEBI:29105"/>
        <label>2</label>
    </ligand>
</feature>
<feature type="binding site" evidence="2">
    <location>
        <position position="28"/>
    </location>
    <ligand>
        <name>Zn(2+)</name>
        <dbReference type="ChEBI" id="CHEBI:29105"/>
        <label>2</label>
    </ligand>
</feature>
<feature type="binding site" evidence="2">
    <location>
        <position position="33"/>
    </location>
    <ligand>
        <name>Zn(2+)</name>
        <dbReference type="ChEBI" id="CHEBI:29105"/>
        <label>1</label>
    </ligand>
</feature>
<feature type="binding site" evidence="2">
    <location>
        <position position="36"/>
    </location>
    <ligand>
        <name>Zn(2+)</name>
        <dbReference type="ChEBI" id="CHEBI:29105"/>
        <label>1</label>
    </ligand>
</feature>
<feature type="binding site" evidence="2">
    <location>
        <position position="42"/>
    </location>
    <ligand>
        <name>Zn(2+)</name>
        <dbReference type="ChEBI" id="CHEBI:29105"/>
        <label>2</label>
    </ligand>
</feature>
<feature type="binding site" evidence="2">
    <location>
        <position position="44"/>
    </location>
    <ligand>
        <name>Zn(2+)</name>
        <dbReference type="ChEBI" id="CHEBI:29105"/>
        <label>2</label>
    </ligand>
</feature>
<feature type="binding site" evidence="2">
    <location>
        <position position="100"/>
    </location>
    <ligand>
        <name>Zn(2+)</name>
        <dbReference type="ChEBI" id="CHEBI:29105"/>
        <label>3</label>
    </ligand>
</feature>
<feature type="binding site" evidence="2">
    <location>
        <position position="105"/>
    </location>
    <ligand>
        <name>Zn(2+)</name>
        <dbReference type="ChEBI" id="CHEBI:29105"/>
        <label>3</label>
    </ligand>
</feature>
<feature type="binding site" evidence="2">
    <location>
        <position position="115"/>
    </location>
    <ligand>
        <name>Zn(2+)</name>
        <dbReference type="ChEBI" id="CHEBI:29105"/>
        <label>4</label>
    </ligand>
</feature>
<feature type="binding site" evidence="2">
    <location>
        <position position="118"/>
    </location>
    <ligand>
        <name>Zn(2+)</name>
        <dbReference type="ChEBI" id="CHEBI:29105"/>
        <label>4</label>
    </ligand>
</feature>
<feature type="binding site" evidence="2">
    <location>
        <position position="123"/>
    </location>
    <ligand>
        <name>Zn(2+)</name>
        <dbReference type="ChEBI" id="CHEBI:29105"/>
        <label>3</label>
    </ligand>
</feature>
<feature type="binding site" evidence="2">
    <location>
        <position position="126"/>
    </location>
    <ligand>
        <name>Zn(2+)</name>
        <dbReference type="ChEBI" id="CHEBI:29105"/>
        <label>3</label>
    </ligand>
</feature>
<feature type="binding site" evidence="2">
    <location>
        <position position="132"/>
    </location>
    <ligand>
        <name>Zn(2+)</name>
        <dbReference type="ChEBI" id="CHEBI:29105"/>
        <label>4</label>
    </ligand>
</feature>
<feature type="binding site" evidence="2">
    <location>
        <position position="134"/>
    </location>
    <ligand>
        <name>Zn(2+)</name>
        <dbReference type="ChEBI" id="CHEBI:29105"/>
        <label>4</label>
    </ligand>
</feature>
<feature type="modified residue" description="Phosphoserine; by MAPK14" evidence="11">
    <location>
        <position position="163"/>
    </location>
</feature>
<feature type="modified residue" description="Phosphoserine; by MAPK14" evidence="11">
    <location>
        <position position="173"/>
    </location>
</feature>
<feature type="modified residue" description="Phosphoserine; by MAPK14" evidence="11">
    <location>
        <position position="187"/>
    </location>
</feature>
<feature type="modified residue" description="Cysteine methyl ester" evidence="11">
    <location>
        <position position="254"/>
    </location>
</feature>
<feature type="lipid moiety-binding region" description="S-geranylgeranyl cysteine" evidence="11">
    <location>
        <position position="254"/>
    </location>
</feature>
<feature type="mutagenesis site" description="No effect on association with the proteasome complex; when associated with A-173 and A-187." evidence="4">
    <original>S</original>
    <variation>A</variation>
    <location>
        <position position="163"/>
    </location>
</feature>
<feature type="mutagenesis site" description="No effect on association with the proteasome complex; when associated with D-173 and D-187." evidence="4">
    <original>S</original>
    <variation>D</variation>
    <location>
        <position position="163"/>
    </location>
</feature>
<feature type="mutagenesis site" description="No effect on association with the proteasome complex; when associated with A-163 and A-187." evidence="4">
    <original>S</original>
    <variation>A</variation>
    <location>
        <position position="173"/>
    </location>
</feature>
<feature type="mutagenesis site" description="No effect on association with the proteasome complex; when associated with D-163 and D-187." evidence="4">
    <original>S</original>
    <variation>D</variation>
    <location>
        <position position="173"/>
    </location>
</feature>
<feature type="mutagenesis site" description="No effect on association with the proteasome complex; when associated with A-163 and A-173." evidence="4">
    <original>S</original>
    <variation>A</variation>
    <location>
        <position position="187"/>
    </location>
</feature>
<feature type="mutagenesis site" description="No effect on association with the proteasome complex; when associated with D-163 and D-173." evidence="4">
    <original>S</original>
    <variation>D</variation>
    <location>
        <position position="187"/>
    </location>
</feature>
<feature type="mutagenesis site" description="Loss of interaction with ubiquitin polymers and ubiquitinated proteins, loss of interaction with BAG6 and no effect on association with the proteasome complex; when associated with Q-229 and Q-231." evidence="4 6">
    <original>A</original>
    <variation>Q</variation>
    <location>
        <position position="201"/>
    </location>
</feature>
<feature type="mutagenesis site" description="Decreased 'Lys-48'-linked polyubiquitin binding." evidence="8">
    <original>L</original>
    <variation>A</variation>
    <location>
        <position position="202"/>
    </location>
</feature>
<feature type="mutagenesis site" description="Decreased 'Lys-48'-linked polyubiquitin binding. Loss of 'Lys-48'-linked polyubiquitin binding, loss of interaction with BAG6 and loss of association with the proteasome complex; when associated with Q-229 and Q-231." evidence="8">
    <original>A</original>
    <variation>Q</variation>
    <location>
        <position position="205"/>
    </location>
</feature>
<feature type="mutagenesis site" description="Decreased 'Lys-48'-linked polyubiquitin binding." evidence="8">
    <original>L</original>
    <variation>A</variation>
    <location>
        <position position="206"/>
    </location>
</feature>
<feature type="mutagenesis site" description="No effect on 'Lys-48'-linked polyubiquitin binding." evidence="8">
    <original>AKPQVLSS</original>
    <variation>QQQQQQQQ</variation>
    <location>
        <begin position="213"/>
        <end position="220"/>
    </location>
</feature>
<feature type="mutagenesis site" description="No effect on 'Lys-48'-linked polyubiquitin binding." evidence="8">
    <original>K</original>
    <variation>A</variation>
    <variation>G</variation>
    <location>
        <position position="214"/>
    </location>
</feature>
<feature type="mutagenesis site" description="No effect on 'Lys-48'-linked polyubiquitin binding." evidence="8">
    <original>P</original>
    <variation>A</variation>
    <variation>G</variation>
    <location>
        <position position="215"/>
    </location>
</feature>
<feature type="mutagenesis site" description="No effect on 'Lys-48'-linked polyubiquitin binding." evidence="8">
    <location>
        <position position="215"/>
    </location>
</feature>
<feature type="mutagenesis site" description="No effect on 'Lys-48'-linked polyubiquitin binding." evidence="8">
    <original>L</original>
    <variation>A</variation>
    <location>
        <position position="218"/>
    </location>
</feature>
<feature type="mutagenesis site" description="No effect on 'Lys-48'-linked polyubiquitin binding." evidence="8">
    <original>L</original>
    <variation>A</variation>
    <location>
        <position position="226"/>
    </location>
</feature>
<feature type="mutagenesis site" description="Decreased 'Lys-48'-linked polyubiquitin binding; when associated with A-230." evidence="8">
    <original>A</original>
    <variation>Q</variation>
    <location>
        <position position="227"/>
    </location>
</feature>
<feature type="mutagenesis site" description="Decreased 'Lys-48'-linked polyubiquitin binding. Loss of interaction with BAG6. Decreased association with the proteasome complex." evidence="8">
    <original>L</original>
    <variation>A</variation>
    <location>
        <position position="228"/>
    </location>
</feature>
<feature type="mutagenesis site" description="Decreased 'Lys-48'-linked polyubiquitin binding. Loss of interaction with ubiquitin polymers and ubiquitinated proteins, loss of interaction with BAG6 and no effect on association with the proteasome complex; when associated with Q-201 and Q-231. Loss of 'Lys-48'-linked polyubiquitin binding, loss of interaction with BAG6 and loss of association with the proteasome complex; when associated with Q-205 and Q-231." evidence="4 6 8">
    <original>A</original>
    <variation>Q</variation>
    <location>
        <position position="229"/>
    </location>
</feature>
<feature type="mutagenesis site" description="Decreased 'Lys-48'-linked polyubiquitin binding; when associated with Q-227." evidence="8">
    <original>Q</original>
    <variation>A</variation>
    <location>
        <position position="230"/>
    </location>
</feature>
<feature type="mutagenesis site" description="Decreased 'Lys-48'-linked polyubiquitin binding. Loss of interaction with ubiquitin polymers and ubiquitinated proteins, loss of interaction with BAG6 and no effect on association with the proteasome complex; when associated with Q-201 and Q-229. Loss of 'Lys-48'-linked polyubiquitin binding, loss of interaction with BAG6 and loss of association with the proteasome complex; when associated with Q-205 and Q-229." evidence="4 6 8">
    <original>A</original>
    <variation>Q</variation>
    <location>
        <position position="231"/>
    </location>
</feature>
<feature type="mutagenesis site" description="Decreased 'Lys-48'-linked polyubiquitin binding." evidence="8">
    <original>S</original>
    <variation>G</variation>
    <location>
        <position position="233"/>
    </location>
</feature>
<feature type="mutagenesis site" description="Loss of localization to the endoplasmic reticulum membrane. Loss of interaction with BAG6. No effect on association with the proteasome complex." evidence="4">
    <original>C</original>
    <variation>S</variation>
    <location>
        <position position="254"/>
    </location>
</feature>
<feature type="sequence conflict" description="In Ref. 1; BAB23266." evidence="10" ref="1">
    <original>P</original>
    <variation>S</variation>
    <location>
        <position position="174"/>
    </location>
</feature>
<feature type="helix" evidence="15">
    <location>
        <begin position="199"/>
        <end position="210"/>
    </location>
</feature>
<feature type="turn" evidence="15">
    <location>
        <begin position="215"/>
        <end position="218"/>
    </location>
</feature>
<feature type="helix" evidence="15">
    <location>
        <begin position="222"/>
        <end position="235"/>
    </location>
</feature>
<accession>Q91X58</accession>
<accession>Q9D0W4</accession>